<dbReference type="EC" id="2.3.1.35" evidence="1"/>
<dbReference type="EC" id="2.3.1.1" evidence="1"/>
<dbReference type="EMBL" id="AE016958">
    <property type="protein sequence ID" value="AAS03679.1"/>
    <property type="molecule type" value="Genomic_DNA"/>
</dbReference>
<dbReference type="RefSeq" id="WP_003876276.1">
    <property type="nucleotide sequence ID" value="NZ_CP106873.1"/>
</dbReference>
<dbReference type="SMR" id="P62063"/>
<dbReference type="STRING" id="262316.MAP_1362"/>
<dbReference type="GeneID" id="75270519"/>
<dbReference type="KEGG" id="mpa:MAP_1362"/>
<dbReference type="eggNOG" id="COG1364">
    <property type="taxonomic scope" value="Bacteria"/>
</dbReference>
<dbReference type="HOGENOM" id="CLU_027172_2_0_11"/>
<dbReference type="UniPathway" id="UPA00068">
    <property type="reaction ID" value="UER00106"/>
</dbReference>
<dbReference type="UniPathway" id="UPA00068">
    <property type="reaction ID" value="UER00111"/>
</dbReference>
<dbReference type="Proteomes" id="UP000000580">
    <property type="component" value="Chromosome"/>
</dbReference>
<dbReference type="GO" id="GO:0005737">
    <property type="term" value="C:cytoplasm"/>
    <property type="evidence" value="ECO:0007669"/>
    <property type="project" value="UniProtKB-SubCell"/>
</dbReference>
<dbReference type="GO" id="GO:0004358">
    <property type="term" value="F:glutamate N-acetyltransferase activity"/>
    <property type="evidence" value="ECO:0007669"/>
    <property type="project" value="UniProtKB-UniRule"/>
</dbReference>
<dbReference type="GO" id="GO:0004042">
    <property type="term" value="F:L-glutamate N-acetyltransferase activity"/>
    <property type="evidence" value="ECO:0007669"/>
    <property type="project" value="UniProtKB-UniRule"/>
</dbReference>
<dbReference type="GO" id="GO:0006526">
    <property type="term" value="P:L-arginine biosynthetic process"/>
    <property type="evidence" value="ECO:0007669"/>
    <property type="project" value="UniProtKB-UniRule"/>
</dbReference>
<dbReference type="GO" id="GO:0006592">
    <property type="term" value="P:ornithine biosynthetic process"/>
    <property type="evidence" value="ECO:0007669"/>
    <property type="project" value="TreeGrafter"/>
</dbReference>
<dbReference type="CDD" id="cd02152">
    <property type="entry name" value="OAT"/>
    <property type="match status" value="1"/>
</dbReference>
<dbReference type="FunFam" id="3.10.20.340:FF:000005">
    <property type="entry name" value="Arginine biosynthesis bifunctional protein ArgJ"/>
    <property type="match status" value="1"/>
</dbReference>
<dbReference type="Gene3D" id="3.30.2330.10">
    <property type="entry name" value="arginine biosynthesis bifunctional protein suprefamily"/>
    <property type="match status" value="1"/>
</dbReference>
<dbReference type="Gene3D" id="3.10.20.340">
    <property type="entry name" value="ArgJ beta chain, C-terminal domain"/>
    <property type="match status" value="1"/>
</dbReference>
<dbReference type="Gene3D" id="3.60.70.12">
    <property type="entry name" value="L-amino peptidase D-ALA esterase/amidase"/>
    <property type="match status" value="1"/>
</dbReference>
<dbReference type="HAMAP" id="MF_01106">
    <property type="entry name" value="ArgJ"/>
    <property type="match status" value="1"/>
</dbReference>
<dbReference type="InterPro" id="IPR002813">
    <property type="entry name" value="Arg_biosynth_ArgJ"/>
</dbReference>
<dbReference type="InterPro" id="IPR016117">
    <property type="entry name" value="ArgJ-like_dom_sf"/>
</dbReference>
<dbReference type="InterPro" id="IPR042195">
    <property type="entry name" value="ArgJ_beta_C"/>
</dbReference>
<dbReference type="NCBIfam" id="TIGR00120">
    <property type="entry name" value="ArgJ"/>
    <property type="match status" value="1"/>
</dbReference>
<dbReference type="NCBIfam" id="NF003802">
    <property type="entry name" value="PRK05388.1"/>
    <property type="match status" value="1"/>
</dbReference>
<dbReference type="PANTHER" id="PTHR23100">
    <property type="entry name" value="ARGININE BIOSYNTHESIS BIFUNCTIONAL PROTEIN ARGJ"/>
    <property type="match status" value="1"/>
</dbReference>
<dbReference type="PANTHER" id="PTHR23100:SF0">
    <property type="entry name" value="ARGININE BIOSYNTHESIS BIFUNCTIONAL PROTEIN ARGJ, MITOCHONDRIAL"/>
    <property type="match status" value="1"/>
</dbReference>
<dbReference type="Pfam" id="PF01960">
    <property type="entry name" value="ArgJ"/>
    <property type="match status" value="1"/>
</dbReference>
<dbReference type="SUPFAM" id="SSF56266">
    <property type="entry name" value="DmpA/ArgJ-like"/>
    <property type="match status" value="1"/>
</dbReference>
<organism>
    <name type="scientific">Mycolicibacterium paratuberculosis (strain ATCC BAA-968 / K-10)</name>
    <name type="common">Mycobacterium paratuberculosis</name>
    <dbReference type="NCBI Taxonomy" id="262316"/>
    <lineage>
        <taxon>Bacteria</taxon>
        <taxon>Bacillati</taxon>
        <taxon>Actinomycetota</taxon>
        <taxon>Actinomycetes</taxon>
        <taxon>Mycobacteriales</taxon>
        <taxon>Mycobacteriaceae</taxon>
        <taxon>Mycobacterium</taxon>
        <taxon>Mycobacterium avium complex (MAC)</taxon>
    </lineage>
</organism>
<accession>P62063</accession>
<evidence type="ECO:0000255" key="1">
    <source>
        <dbReference type="HAMAP-Rule" id="MF_01106"/>
    </source>
</evidence>
<name>ARGJ_MYCPA</name>
<feature type="chain" id="PRO_0000002191" description="Arginine biosynthesis bifunctional protein ArgJ alpha chain" evidence="1">
    <location>
        <begin position="1"/>
        <end position="199"/>
    </location>
</feature>
<feature type="chain" id="PRO_0000002192" description="Arginine biosynthesis bifunctional protein ArgJ beta chain" evidence="1">
    <location>
        <begin position="200"/>
        <end position="404"/>
    </location>
</feature>
<feature type="active site" description="Nucleophile" evidence="1">
    <location>
        <position position="200"/>
    </location>
</feature>
<feature type="binding site" evidence="1">
    <location>
        <position position="166"/>
    </location>
    <ligand>
        <name>substrate</name>
    </ligand>
</feature>
<feature type="binding site" evidence="1">
    <location>
        <position position="189"/>
    </location>
    <ligand>
        <name>substrate</name>
    </ligand>
</feature>
<feature type="binding site" evidence="1">
    <location>
        <position position="200"/>
    </location>
    <ligand>
        <name>substrate</name>
    </ligand>
</feature>
<feature type="binding site" evidence="1">
    <location>
        <position position="280"/>
    </location>
    <ligand>
        <name>substrate</name>
    </ligand>
</feature>
<feature type="binding site" evidence="1">
    <location>
        <position position="399"/>
    </location>
    <ligand>
        <name>substrate</name>
    </ligand>
</feature>
<feature type="binding site" evidence="1">
    <location>
        <position position="404"/>
    </location>
    <ligand>
        <name>substrate</name>
    </ligand>
</feature>
<feature type="site" description="Involved in the stabilization of negative charge on the oxyanion by the formation of the oxyanion hole" evidence="1">
    <location>
        <position position="127"/>
    </location>
</feature>
<feature type="site" description="Involved in the stabilization of negative charge on the oxyanion by the formation of the oxyanion hole" evidence="1">
    <location>
        <position position="128"/>
    </location>
</feature>
<feature type="site" description="Cleavage; by autolysis" evidence="1">
    <location>
        <begin position="199"/>
        <end position="200"/>
    </location>
</feature>
<keyword id="KW-0012">Acyltransferase</keyword>
<keyword id="KW-0028">Amino-acid biosynthesis</keyword>
<keyword id="KW-0055">Arginine biosynthesis</keyword>
<keyword id="KW-0068">Autocatalytic cleavage</keyword>
<keyword id="KW-0963">Cytoplasm</keyword>
<keyword id="KW-0511">Multifunctional enzyme</keyword>
<keyword id="KW-1185">Reference proteome</keyword>
<keyword id="KW-0808">Transferase</keyword>
<protein>
    <recommendedName>
        <fullName evidence="1">Arginine biosynthesis bifunctional protein ArgJ</fullName>
    </recommendedName>
    <domain>
        <recommendedName>
            <fullName evidence="1">Glutamate N-acetyltransferase</fullName>
            <ecNumber evidence="1">2.3.1.35</ecNumber>
        </recommendedName>
        <alternativeName>
            <fullName evidence="1">Ornithine acetyltransferase</fullName>
            <shortName evidence="1">OATase</shortName>
        </alternativeName>
        <alternativeName>
            <fullName evidence="1">Ornithine transacetylase</fullName>
        </alternativeName>
    </domain>
    <domain>
        <recommendedName>
            <fullName evidence="1">Amino-acid acetyltransferase</fullName>
            <ecNumber evidence="1">2.3.1.1</ecNumber>
        </recommendedName>
        <alternativeName>
            <fullName evidence="1">N-acetylglutamate synthase</fullName>
            <shortName evidence="1">AGSase</shortName>
        </alternativeName>
    </domain>
    <component>
        <recommendedName>
            <fullName evidence="1">Arginine biosynthesis bifunctional protein ArgJ alpha chain</fullName>
        </recommendedName>
    </component>
    <component>
        <recommendedName>
            <fullName evidence="1">Arginine biosynthesis bifunctional protein ArgJ beta chain</fullName>
        </recommendedName>
    </component>
</protein>
<sequence>MTETVNAARLLREQGVTAPAGFRAAGIAAGIKASGKRDLALVFNEGPDYGAAGVFTRNKVKAAPVLWSQQVLTTGALRAVILNSGGANACTGPGGFQDAHATAEAVAAALSDWGTETGAIEVAVCSTGLIGDRLPMDKLLAGVRTIVQDMAGGLSGGDDAAQAIMTTDTVPKQVALHHPGNWTVGGMAKGAGMIAPSLATMLCVLTTDAAVDPVALDTALRRATAATFDRLDIDGACSTNDTVLLLASGASGITPAQADLDDAVLRVCDDLCAQLQADAEGVTKRVNVTVTGAASDDDAVVAARTIARDSLVKTAVFGSDPNWGRVVAAVGIAPIALDPDRMTVSFNGSAVFADGVGTPGAREVDLSGPDIDITVDLRLGDGRATVRTTDLSHGYVEENSAYSS</sequence>
<reference key="1">
    <citation type="journal article" date="2005" name="Proc. Natl. Acad. Sci. U.S.A.">
        <title>The complete genome sequence of Mycobacterium avium subspecies paratuberculosis.</title>
        <authorList>
            <person name="Li L."/>
            <person name="Bannantine J.P."/>
            <person name="Zhang Q."/>
            <person name="Amonsin A."/>
            <person name="May B.J."/>
            <person name="Alt D."/>
            <person name="Banerji N."/>
            <person name="Kanjilal S."/>
            <person name="Kapur V."/>
        </authorList>
    </citation>
    <scope>NUCLEOTIDE SEQUENCE [LARGE SCALE GENOMIC DNA]</scope>
    <source>
        <strain>ATCC BAA-968 / K-10</strain>
    </source>
</reference>
<gene>
    <name evidence="1" type="primary">argJ</name>
    <name type="ordered locus">MAP_1362</name>
</gene>
<proteinExistence type="inferred from homology"/>
<comment type="function">
    <text evidence="1">Catalyzes two activities which are involved in the cyclic version of arginine biosynthesis: the synthesis of N-acetylglutamate from glutamate and acetyl-CoA as the acetyl donor, and of ornithine by transacetylation between N(2)-acetylornithine and glutamate.</text>
</comment>
<comment type="catalytic activity">
    <reaction evidence="1">
        <text>N(2)-acetyl-L-ornithine + L-glutamate = N-acetyl-L-glutamate + L-ornithine</text>
        <dbReference type="Rhea" id="RHEA:15349"/>
        <dbReference type="ChEBI" id="CHEBI:29985"/>
        <dbReference type="ChEBI" id="CHEBI:44337"/>
        <dbReference type="ChEBI" id="CHEBI:46911"/>
        <dbReference type="ChEBI" id="CHEBI:57805"/>
        <dbReference type="EC" id="2.3.1.35"/>
    </reaction>
</comment>
<comment type="catalytic activity">
    <reaction evidence="1">
        <text>L-glutamate + acetyl-CoA = N-acetyl-L-glutamate + CoA + H(+)</text>
        <dbReference type="Rhea" id="RHEA:24292"/>
        <dbReference type="ChEBI" id="CHEBI:15378"/>
        <dbReference type="ChEBI" id="CHEBI:29985"/>
        <dbReference type="ChEBI" id="CHEBI:44337"/>
        <dbReference type="ChEBI" id="CHEBI:57287"/>
        <dbReference type="ChEBI" id="CHEBI:57288"/>
        <dbReference type="EC" id="2.3.1.1"/>
    </reaction>
</comment>
<comment type="pathway">
    <text evidence="1">Amino-acid biosynthesis; L-arginine biosynthesis; L-ornithine and N-acetyl-L-glutamate from L-glutamate and N(2)-acetyl-L-ornithine (cyclic): step 1/1.</text>
</comment>
<comment type="pathway">
    <text evidence="1">Amino-acid biosynthesis; L-arginine biosynthesis; N(2)-acetyl-L-ornithine from L-glutamate: step 1/4.</text>
</comment>
<comment type="subunit">
    <text evidence="1">Heterotetramer of two alpha and two beta chains.</text>
</comment>
<comment type="subcellular location">
    <subcellularLocation>
        <location evidence="1">Cytoplasm</location>
    </subcellularLocation>
</comment>
<comment type="similarity">
    <text evidence="1">Belongs to the ArgJ family.</text>
</comment>